<evidence type="ECO:0000250" key="1"/>
<evidence type="ECO:0000255" key="2"/>
<evidence type="ECO:0000305" key="3"/>
<comment type="function">
    <text evidence="1">May be involved in countering the first line of host defense mechanisms. Impairs the leukocyte response to FPRL1 agonists by binding directly to host FPRL1 (By similarity).</text>
</comment>
<comment type="subcellular location">
    <subcellularLocation>
        <location evidence="1">Secreted</location>
    </subcellularLocation>
</comment>
<comment type="similarity">
    <text evidence="3">Belongs to the CHIPS/FLIPr family.</text>
</comment>
<protein>
    <recommendedName>
        <fullName>FPRL1 inhibitory protein</fullName>
        <shortName>FLIPr</shortName>
    </recommendedName>
</protein>
<gene>
    <name type="primary">flr</name>
    <name type="ordered locus">SACOL1166</name>
</gene>
<proteinExistence type="inferred from homology"/>
<reference key="1">
    <citation type="journal article" date="2005" name="J. Bacteriol.">
        <title>Insights on evolution of virulence and resistance from the complete genome analysis of an early methicillin-resistant Staphylococcus aureus strain and a biofilm-producing methicillin-resistant Staphylococcus epidermidis strain.</title>
        <authorList>
            <person name="Gill S.R."/>
            <person name="Fouts D.E."/>
            <person name="Archer G.L."/>
            <person name="Mongodin E.F."/>
            <person name="DeBoy R.T."/>
            <person name="Ravel J."/>
            <person name="Paulsen I.T."/>
            <person name="Kolonay J.F."/>
            <person name="Brinkac L.M."/>
            <person name="Beanan M.J."/>
            <person name="Dodson R.J."/>
            <person name="Daugherty S.C."/>
            <person name="Madupu R."/>
            <person name="Angiuoli S.V."/>
            <person name="Durkin A.S."/>
            <person name="Haft D.H."/>
            <person name="Vamathevan J.J."/>
            <person name="Khouri H."/>
            <person name="Utterback T.R."/>
            <person name="Lee C."/>
            <person name="Dimitrov G."/>
            <person name="Jiang L."/>
            <person name="Qin H."/>
            <person name="Weidman J."/>
            <person name="Tran K."/>
            <person name="Kang K.H."/>
            <person name="Hance I.R."/>
            <person name="Nelson K.E."/>
            <person name="Fraser C.M."/>
        </authorList>
    </citation>
    <scope>NUCLEOTIDE SEQUENCE [LARGE SCALE GENOMIC DNA]</scope>
    <source>
        <strain>COL</strain>
    </source>
</reference>
<keyword id="KW-0964">Secreted</keyword>
<keyword id="KW-0732">Signal</keyword>
<keyword id="KW-0843">Virulence</keyword>
<organism>
    <name type="scientific">Staphylococcus aureus (strain COL)</name>
    <dbReference type="NCBI Taxonomy" id="93062"/>
    <lineage>
        <taxon>Bacteria</taxon>
        <taxon>Bacillati</taxon>
        <taxon>Bacillota</taxon>
        <taxon>Bacilli</taxon>
        <taxon>Bacillales</taxon>
        <taxon>Staphylococcaceae</taxon>
        <taxon>Staphylococcus</taxon>
    </lineage>
</organism>
<dbReference type="EMBL" id="CP000046">
    <property type="protein sequence ID" value="AAW36545.1"/>
    <property type="molecule type" value="Genomic_DNA"/>
</dbReference>
<dbReference type="RefSeq" id="WP_000739563.1">
    <property type="nucleotide sequence ID" value="NZ_JBGOFO010000002.1"/>
</dbReference>
<dbReference type="KEGG" id="sac:SACOL1166"/>
<dbReference type="HOGENOM" id="CLU_157996_0_0_9"/>
<dbReference type="Proteomes" id="UP000000530">
    <property type="component" value="Chromosome"/>
</dbReference>
<dbReference type="GO" id="GO:0005576">
    <property type="term" value="C:extracellular region"/>
    <property type="evidence" value="ECO:0007669"/>
    <property type="project" value="UniProtKB-SubCell"/>
</dbReference>
<dbReference type="Gene3D" id="3.10.20.390">
    <property type="entry name" value="Chemotaxis-inhibiting protein CHIPS"/>
    <property type="match status" value="1"/>
</dbReference>
<dbReference type="InterPro" id="IPR023256">
    <property type="entry name" value="FLIPR"/>
</dbReference>
<dbReference type="InterPro" id="IPR038529">
    <property type="entry name" value="FLIPR/CHIP_sf"/>
</dbReference>
<dbReference type="InterPro" id="IPR023253">
    <property type="entry name" value="FLIPR/CHIPS"/>
</dbReference>
<dbReference type="NCBIfam" id="NF009592">
    <property type="entry name" value="PRK13033.1"/>
    <property type="match status" value="1"/>
</dbReference>
<dbReference type="Pfam" id="PF16104">
    <property type="entry name" value="FPRL1_inhibitor"/>
    <property type="match status" value="1"/>
</dbReference>
<dbReference type="PRINTS" id="PR02037">
    <property type="entry name" value="FLIPR"/>
</dbReference>
<dbReference type="PRINTS" id="PR02035">
    <property type="entry name" value="FLIPRCHIPS"/>
</dbReference>
<sequence length="133" mass="15203">MKKNITKTIIASTVIAAGLLTQTNDAKAFFSYEWKGLEIAKNLADQAKKDDERIDKLMKESDKNLTPYKAETVNDLYLIVKKLSQGDVKKAVVRIKDGGPRDYYTFDLTRPLEENRKNIKVVKNGEIDSITWY</sequence>
<name>FLIPR_STAAC</name>
<feature type="signal peptide" evidence="2">
    <location>
        <begin position="1"/>
        <end position="28"/>
    </location>
</feature>
<feature type="chain" id="PRO_0000286682" description="FPRL1 inhibitory protein">
    <location>
        <begin position="29"/>
        <end position="133"/>
    </location>
</feature>
<accession>Q5HGS8</accession>